<accession>Q320Y4</accession>
<sequence>MTDYLLLFVGTILVNNFVLVKFLGLCPFMGVSKKLETAMGMGLATTFVMTLASICAWLIDTWILIPLNLIYLRTLAFILVIAVVVQFTEMVVRKTSPVLYRLLGIFLPLITTNCAVLGVALLNINLGHNFLQSALYGFSAAVGFSLVMVLFTAIRERLAVADVPAPFRGNAIALITAGLMSLAFMGFSGLVKL</sequence>
<keyword id="KW-0997">Cell inner membrane</keyword>
<keyword id="KW-1003">Cell membrane</keyword>
<keyword id="KW-0249">Electron transport</keyword>
<keyword id="KW-0472">Membrane</keyword>
<keyword id="KW-1278">Translocase</keyword>
<keyword id="KW-0812">Transmembrane</keyword>
<keyword id="KW-1133">Transmembrane helix</keyword>
<keyword id="KW-0813">Transport</keyword>
<gene>
    <name evidence="1" type="primary">rsxA</name>
    <name type="ordered locus">SBO_1507</name>
</gene>
<comment type="function">
    <text evidence="1">Part of a membrane-bound complex that couples electron transfer with translocation of ions across the membrane. Required to maintain the reduced state of SoxR.</text>
</comment>
<comment type="subunit">
    <text evidence="1">The complex is composed of six subunits: RsxA, RsxB, RsxC, RsxD, RsxE and RsxG.</text>
</comment>
<comment type="subcellular location">
    <subcellularLocation>
        <location evidence="1">Cell inner membrane</location>
        <topology evidence="1">Multi-pass membrane protein</topology>
    </subcellularLocation>
</comment>
<comment type="similarity">
    <text evidence="1">Belongs to the NqrDE/RnfAE family.</text>
</comment>
<feature type="chain" id="PRO_1000013556" description="Ion-translocating oxidoreductase complex subunit A">
    <location>
        <begin position="1"/>
        <end position="193"/>
    </location>
</feature>
<feature type="transmembrane region" description="Helical" evidence="1">
    <location>
        <begin position="5"/>
        <end position="25"/>
    </location>
</feature>
<feature type="transmembrane region" description="Helical" evidence="1">
    <location>
        <begin position="39"/>
        <end position="59"/>
    </location>
</feature>
<feature type="transmembrane region" description="Helical" evidence="1">
    <location>
        <begin position="63"/>
        <end position="83"/>
    </location>
</feature>
<feature type="transmembrane region" description="Helical" evidence="1">
    <location>
        <begin position="102"/>
        <end position="122"/>
    </location>
</feature>
<feature type="transmembrane region" description="Helical" evidence="1">
    <location>
        <begin position="134"/>
        <end position="154"/>
    </location>
</feature>
<feature type="transmembrane region" description="Helical" evidence="1">
    <location>
        <begin position="171"/>
        <end position="191"/>
    </location>
</feature>
<dbReference type="EC" id="7.-.-.-" evidence="1"/>
<dbReference type="EMBL" id="CP000036">
    <property type="protein sequence ID" value="ABB66124.1"/>
    <property type="molecule type" value="Genomic_DNA"/>
</dbReference>
<dbReference type="RefSeq" id="WP_000133174.1">
    <property type="nucleotide sequence ID" value="NC_007613.1"/>
</dbReference>
<dbReference type="SMR" id="Q320Y4"/>
<dbReference type="KEGG" id="sbo:SBO_1507"/>
<dbReference type="HOGENOM" id="CLU_095255_1_0_6"/>
<dbReference type="Proteomes" id="UP000007067">
    <property type="component" value="Chromosome"/>
</dbReference>
<dbReference type="GO" id="GO:0005886">
    <property type="term" value="C:plasma membrane"/>
    <property type="evidence" value="ECO:0007669"/>
    <property type="project" value="UniProtKB-SubCell"/>
</dbReference>
<dbReference type="GO" id="GO:0022900">
    <property type="term" value="P:electron transport chain"/>
    <property type="evidence" value="ECO:0007669"/>
    <property type="project" value="UniProtKB-UniRule"/>
</dbReference>
<dbReference type="HAMAP" id="MF_00459">
    <property type="entry name" value="RsxA_RnfA"/>
    <property type="match status" value="1"/>
</dbReference>
<dbReference type="InterPro" id="IPR011293">
    <property type="entry name" value="Ion_transpt_RnfA/RsxA"/>
</dbReference>
<dbReference type="InterPro" id="IPR003667">
    <property type="entry name" value="NqrDE/RnfAE"/>
</dbReference>
<dbReference type="InterPro" id="IPR050133">
    <property type="entry name" value="NqrDE/RnfAE_oxidrdctase"/>
</dbReference>
<dbReference type="NCBIfam" id="NF003481">
    <property type="entry name" value="PRK05151.1"/>
    <property type="match status" value="1"/>
</dbReference>
<dbReference type="NCBIfam" id="TIGR01943">
    <property type="entry name" value="rnfA"/>
    <property type="match status" value="1"/>
</dbReference>
<dbReference type="PANTHER" id="PTHR30335">
    <property type="entry name" value="INTEGRAL MEMBRANE PROTEIN OF SOXR-REDUCING COMPLEX"/>
    <property type="match status" value="1"/>
</dbReference>
<dbReference type="PANTHER" id="PTHR30335:SF0">
    <property type="entry name" value="ION-TRANSLOCATING OXIDOREDUCTASE COMPLEX SUBUNIT A"/>
    <property type="match status" value="1"/>
</dbReference>
<dbReference type="Pfam" id="PF02508">
    <property type="entry name" value="Rnf-Nqr"/>
    <property type="match status" value="1"/>
</dbReference>
<dbReference type="PIRSF" id="PIRSF006102">
    <property type="entry name" value="NQR_DE"/>
    <property type="match status" value="1"/>
</dbReference>
<proteinExistence type="inferred from homology"/>
<organism>
    <name type="scientific">Shigella boydii serotype 4 (strain Sb227)</name>
    <dbReference type="NCBI Taxonomy" id="300268"/>
    <lineage>
        <taxon>Bacteria</taxon>
        <taxon>Pseudomonadati</taxon>
        <taxon>Pseudomonadota</taxon>
        <taxon>Gammaproteobacteria</taxon>
        <taxon>Enterobacterales</taxon>
        <taxon>Enterobacteriaceae</taxon>
        <taxon>Shigella</taxon>
    </lineage>
</organism>
<evidence type="ECO:0000255" key="1">
    <source>
        <dbReference type="HAMAP-Rule" id="MF_00459"/>
    </source>
</evidence>
<protein>
    <recommendedName>
        <fullName evidence="1">Ion-translocating oxidoreductase complex subunit A</fullName>
        <ecNumber evidence="1">7.-.-.-</ecNumber>
    </recommendedName>
    <alternativeName>
        <fullName evidence="1">Rsx electron transport complex subunit A</fullName>
    </alternativeName>
</protein>
<name>RSXA_SHIBS</name>
<reference key="1">
    <citation type="journal article" date="2005" name="Nucleic Acids Res.">
        <title>Genome dynamics and diversity of Shigella species, the etiologic agents of bacillary dysentery.</title>
        <authorList>
            <person name="Yang F."/>
            <person name="Yang J."/>
            <person name="Zhang X."/>
            <person name="Chen L."/>
            <person name="Jiang Y."/>
            <person name="Yan Y."/>
            <person name="Tang X."/>
            <person name="Wang J."/>
            <person name="Xiong Z."/>
            <person name="Dong J."/>
            <person name="Xue Y."/>
            <person name="Zhu Y."/>
            <person name="Xu X."/>
            <person name="Sun L."/>
            <person name="Chen S."/>
            <person name="Nie H."/>
            <person name="Peng J."/>
            <person name="Xu J."/>
            <person name="Wang Y."/>
            <person name="Yuan Z."/>
            <person name="Wen Y."/>
            <person name="Yao Z."/>
            <person name="Shen Y."/>
            <person name="Qiang B."/>
            <person name="Hou Y."/>
            <person name="Yu J."/>
            <person name="Jin Q."/>
        </authorList>
    </citation>
    <scope>NUCLEOTIDE SEQUENCE [LARGE SCALE GENOMIC DNA]</scope>
    <source>
        <strain>Sb227</strain>
    </source>
</reference>